<keyword id="KW-0028">Amino-acid biosynthesis</keyword>
<keyword id="KW-0220">Diaminopimelate biosynthesis</keyword>
<keyword id="KW-0378">Hydrolase</keyword>
<keyword id="KW-0457">Lysine biosynthesis</keyword>
<keyword id="KW-1185">Reference proteome</keyword>
<gene>
    <name type="ordered locus">BC_3980</name>
</gene>
<protein>
    <recommendedName>
        <fullName evidence="1">N-acetyldiaminopimelate deacetylase</fullName>
        <ecNumber evidence="1">3.5.1.47</ecNumber>
    </recommendedName>
</protein>
<feature type="chain" id="PRO_0000376740" description="N-acetyldiaminopimelate deacetylase">
    <location>
        <begin position="1"/>
        <end position="376"/>
    </location>
</feature>
<feature type="active site" evidence="1">
    <location>
        <position position="69"/>
    </location>
</feature>
<feature type="active site" description="Proton acceptor" evidence="1">
    <location>
        <position position="128"/>
    </location>
</feature>
<proteinExistence type="inferred from homology"/>
<sequence length="376" mass="42200">MTVSKFVQIRRDLHRIPEIGFKEWKTQQYILDYIGTLSHEFVEVKTWKTGVIVKVNGKNPEKIIGYRADIDGLPITEETGYEFASIHEGMMHACGHDVHTTIGLGLLTKAVSERIDDDLVFLFQPAEEGPGGALPMLESEELKEWKPNIILGLHIAPEYAVGTIATKEGLLFANTSELYIDLKGKGGHAAYPHTANDMIVAASHLVTQLQSVISRNVNPLDSAVITIGKITGGTVQNIIAEKSRLEGTIRTLSVESMKRVKSRIESIVAGIEASFQCEVIIDYGAMYHQVYNHEELTREFMEFVHKQTDMNVITCTEAMTGEDFGYMLREIPGFMFWLGVNSEYGLHHAKLKPDEEVIEKAITFLSQYVKWKGNRK</sequence>
<evidence type="ECO:0000255" key="1">
    <source>
        <dbReference type="HAMAP-Rule" id="MF_01692"/>
    </source>
</evidence>
<dbReference type="EC" id="3.5.1.47" evidence="1"/>
<dbReference type="EMBL" id="AE016877">
    <property type="protein sequence ID" value="AAP10900.1"/>
    <property type="molecule type" value="Genomic_DNA"/>
</dbReference>
<dbReference type="RefSeq" id="NP_833699.1">
    <property type="nucleotide sequence ID" value="NC_004722.1"/>
</dbReference>
<dbReference type="RefSeq" id="WP_000218674.1">
    <property type="nucleotide sequence ID" value="NC_004722.1"/>
</dbReference>
<dbReference type="SMR" id="Q819J6"/>
<dbReference type="STRING" id="226900.BC_3980"/>
<dbReference type="MEROPS" id="M20.A27"/>
<dbReference type="KEGG" id="bce:BC3980"/>
<dbReference type="PATRIC" id="fig|226900.8.peg.4106"/>
<dbReference type="HOGENOM" id="CLU_023257_0_1_9"/>
<dbReference type="OrthoDB" id="9776731at2"/>
<dbReference type="UniPathway" id="UPA00034">
    <property type="reaction ID" value="UER00024"/>
</dbReference>
<dbReference type="Proteomes" id="UP000001417">
    <property type="component" value="Chromosome"/>
</dbReference>
<dbReference type="GO" id="GO:0050118">
    <property type="term" value="F:N-acetyldiaminopimelate deacetylase activity"/>
    <property type="evidence" value="ECO:0000318"/>
    <property type="project" value="GO_Central"/>
</dbReference>
<dbReference type="GO" id="GO:0019877">
    <property type="term" value="P:diaminopimelate biosynthetic process"/>
    <property type="evidence" value="ECO:0000318"/>
    <property type="project" value="GO_Central"/>
</dbReference>
<dbReference type="GO" id="GO:0009089">
    <property type="term" value="P:lysine biosynthetic process via diaminopimelate"/>
    <property type="evidence" value="ECO:0007669"/>
    <property type="project" value="UniProtKB-UniRule"/>
</dbReference>
<dbReference type="CDD" id="cd05670">
    <property type="entry name" value="M20_Acy1_YkuR-like"/>
    <property type="match status" value="1"/>
</dbReference>
<dbReference type="FunFam" id="3.30.70.360:FF:000001">
    <property type="entry name" value="N-acetyldiaminopimelate deacetylase"/>
    <property type="match status" value="1"/>
</dbReference>
<dbReference type="Gene3D" id="3.30.70.360">
    <property type="match status" value="1"/>
</dbReference>
<dbReference type="Gene3D" id="3.40.630.10">
    <property type="entry name" value="Zn peptidases"/>
    <property type="match status" value="1"/>
</dbReference>
<dbReference type="HAMAP" id="MF_01692">
    <property type="entry name" value="DapEL"/>
    <property type="match status" value="1"/>
</dbReference>
<dbReference type="InterPro" id="IPR023905">
    <property type="entry name" value="AcetylDAP_deacetylase"/>
</dbReference>
<dbReference type="InterPro" id="IPR017439">
    <property type="entry name" value="Amidohydrolase"/>
</dbReference>
<dbReference type="InterPro" id="IPR036264">
    <property type="entry name" value="Bact_exopeptidase_dim_dom"/>
</dbReference>
<dbReference type="InterPro" id="IPR002933">
    <property type="entry name" value="Peptidase_M20"/>
</dbReference>
<dbReference type="InterPro" id="IPR011650">
    <property type="entry name" value="Peptidase_M20_dimer"/>
</dbReference>
<dbReference type="NCBIfam" id="TIGR01891">
    <property type="entry name" value="amidohydrolases"/>
    <property type="match status" value="1"/>
</dbReference>
<dbReference type="PANTHER" id="PTHR11014:SF98">
    <property type="entry name" value="N-ACETYLDIAMINOPIMELATE DEACETYLASE"/>
    <property type="match status" value="1"/>
</dbReference>
<dbReference type="PANTHER" id="PTHR11014">
    <property type="entry name" value="PEPTIDASE M20 FAMILY MEMBER"/>
    <property type="match status" value="1"/>
</dbReference>
<dbReference type="Pfam" id="PF07687">
    <property type="entry name" value="M20_dimer"/>
    <property type="match status" value="1"/>
</dbReference>
<dbReference type="Pfam" id="PF01546">
    <property type="entry name" value="Peptidase_M20"/>
    <property type="match status" value="1"/>
</dbReference>
<dbReference type="PIRSF" id="PIRSF005962">
    <property type="entry name" value="Pept_M20D_amidohydro"/>
    <property type="match status" value="1"/>
</dbReference>
<dbReference type="SUPFAM" id="SSF55031">
    <property type="entry name" value="Bacterial exopeptidase dimerisation domain"/>
    <property type="match status" value="1"/>
</dbReference>
<dbReference type="SUPFAM" id="SSF53187">
    <property type="entry name" value="Zn-dependent exopeptidases"/>
    <property type="match status" value="1"/>
</dbReference>
<reference key="1">
    <citation type="journal article" date="2003" name="Nature">
        <title>Genome sequence of Bacillus cereus and comparative analysis with Bacillus anthracis.</title>
        <authorList>
            <person name="Ivanova N."/>
            <person name="Sorokin A."/>
            <person name="Anderson I."/>
            <person name="Galleron N."/>
            <person name="Candelon B."/>
            <person name="Kapatral V."/>
            <person name="Bhattacharyya A."/>
            <person name="Reznik G."/>
            <person name="Mikhailova N."/>
            <person name="Lapidus A."/>
            <person name="Chu L."/>
            <person name="Mazur M."/>
            <person name="Goltsman E."/>
            <person name="Larsen N."/>
            <person name="D'Souza M."/>
            <person name="Walunas T."/>
            <person name="Grechkin Y."/>
            <person name="Pusch G."/>
            <person name="Haselkorn R."/>
            <person name="Fonstein M."/>
            <person name="Ehrlich S.D."/>
            <person name="Overbeek R."/>
            <person name="Kyrpides N.C."/>
        </authorList>
    </citation>
    <scope>NUCLEOTIDE SEQUENCE [LARGE SCALE GENOMIC DNA]</scope>
    <source>
        <strain>ATCC 14579 / DSM 31 / CCUG 7414 / JCM 2152 / NBRC 15305 / NCIMB 9373 / NCTC 2599 / NRRL B-3711</strain>
    </source>
</reference>
<name>DAPEL_BACCR</name>
<comment type="function">
    <text evidence="1">Catalyzes the conversion of N-acetyl-diaminopimelate to diaminopimelate and acetate.</text>
</comment>
<comment type="catalytic activity">
    <reaction evidence="1">
        <text>N-acetyl-(2S,6S)-2,6-diaminopimelate + H2O = (2S,6S)-2,6-diaminopimelate + acetate</text>
        <dbReference type="Rhea" id="RHEA:20405"/>
        <dbReference type="ChEBI" id="CHEBI:15377"/>
        <dbReference type="ChEBI" id="CHEBI:30089"/>
        <dbReference type="ChEBI" id="CHEBI:57609"/>
        <dbReference type="ChEBI" id="CHEBI:58767"/>
        <dbReference type="EC" id="3.5.1.47"/>
    </reaction>
</comment>
<comment type="pathway">
    <text evidence="1">Amino-acid biosynthesis; L-lysine biosynthesis via DAP pathway; LL-2,6-diaminopimelate from (S)-tetrahydrodipicolinate (acetylase route): step 3/3.</text>
</comment>
<comment type="similarity">
    <text evidence="1">Belongs to the peptidase M20A family. N-acetyldiaminopimelate deacetylase subfamily.</text>
</comment>
<organism>
    <name type="scientific">Bacillus cereus (strain ATCC 14579 / DSM 31 / CCUG 7414 / JCM 2152 / NBRC 15305 / NCIMB 9373 / NCTC 2599 / NRRL B-3711)</name>
    <dbReference type="NCBI Taxonomy" id="226900"/>
    <lineage>
        <taxon>Bacteria</taxon>
        <taxon>Bacillati</taxon>
        <taxon>Bacillota</taxon>
        <taxon>Bacilli</taxon>
        <taxon>Bacillales</taxon>
        <taxon>Bacillaceae</taxon>
        <taxon>Bacillus</taxon>
        <taxon>Bacillus cereus group</taxon>
    </lineage>
</organism>
<accession>Q819J6</accession>